<sequence>MNSHFVSAHTPFYINTKEGRYLVLKAVKVCDVRTVECEGSKASCVLKVDKPSSPTCERRPSSPSRCERMNNPGKQVPFMRTDMLQNMFAANRDNVTSRLLN</sequence>
<protein>
    <recommendedName>
        <fullName>Phosphoprotein OPG062</fullName>
    </recommendedName>
</protein>
<gene>
    <name type="primary">OPG062</name>
    <name type="ORF">MPXVgp049</name>
</gene>
<reference key="1">
    <citation type="journal article" date="2022" name="J. Infect. Dis.">
        <title>Exportation of Monkeypox virus from the African continent.</title>
        <authorList>
            <person name="Mauldin M.R."/>
            <person name="McCollum A.M."/>
            <person name="Nakazawa Y.J."/>
            <person name="Mandra A."/>
            <person name="Whitehouse E.R."/>
            <person name="Davidson W."/>
            <person name="Zhao H."/>
            <person name="Gao J."/>
            <person name="Li Y."/>
            <person name="Doty J."/>
            <person name="Yinka-Ogunleye A."/>
            <person name="Akinpelu A."/>
            <person name="Aruna O."/>
            <person name="Naidoo D."/>
            <person name="Lewandowski K."/>
            <person name="Afrough B."/>
            <person name="Graham V."/>
            <person name="Aarons E."/>
            <person name="Hewson R."/>
            <person name="Vipond R."/>
            <person name="Dunning J."/>
            <person name="Chand M."/>
            <person name="Brown C."/>
            <person name="Cohen-Gihon I."/>
            <person name="Erez N."/>
            <person name="Shifman O."/>
            <person name="Israeli O."/>
            <person name="Sharon M."/>
            <person name="Schwartz E."/>
            <person name="Beth-Din A."/>
            <person name="Zvi A."/>
            <person name="Mak T.M."/>
            <person name="Ng Y.K."/>
            <person name="Cui L."/>
            <person name="Lin R.T.P."/>
            <person name="Olson V.A."/>
            <person name="Brooks T."/>
            <person name="Paran N."/>
            <person name="Ihekweazu C."/>
            <person name="Reynolds M.G."/>
        </authorList>
    </citation>
    <scope>NUCLEOTIDE SEQUENCE [LARGE SCALE GENOMIC DNA]</scope>
    <source>
        <strain>MPXV-M5312_HM12_Rivers</strain>
    </source>
</reference>
<feature type="chain" id="PRO_0000457702" description="Phosphoprotein OPG062">
    <location>
        <begin position="1"/>
        <end position="101"/>
    </location>
</feature>
<feature type="region of interest" description="Disordered" evidence="2">
    <location>
        <begin position="50"/>
        <end position="73"/>
    </location>
</feature>
<feature type="compositionally biased region" description="Basic and acidic residues" evidence="2">
    <location>
        <begin position="56"/>
        <end position="68"/>
    </location>
</feature>
<organism>
    <name type="scientific">Monkeypox virus</name>
    <dbReference type="NCBI Taxonomy" id="10244"/>
    <lineage>
        <taxon>Viruses</taxon>
        <taxon>Varidnaviria</taxon>
        <taxon>Bamfordvirae</taxon>
        <taxon>Nucleocytoviricota</taxon>
        <taxon>Pokkesviricetes</taxon>
        <taxon>Chitovirales</taxon>
        <taxon>Poxviridae</taxon>
        <taxon>Chordopoxvirinae</taxon>
        <taxon>Orthopoxvirus</taxon>
    </lineage>
</organism>
<accession>A0A7H0DN35</accession>
<proteinExistence type="inferred from homology"/>
<name>PG062_MONPV</name>
<dbReference type="EMBL" id="MT903340">
    <property type="protein sequence ID" value="QNP12918.1"/>
    <property type="molecule type" value="Genomic_DNA"/>
</dbReference>
<dbReference type="RefSeq" id="NP_536476.1">
    <property type="nucleotide sequence ID" value="NC_003310.1"/>
</dbReference>
<dbReference type="RefSeq" id="YP_010377045.1">
    <property type="nucleotide sequence ID" value="NC_063383.1"/>
</dbReference>
<dbReference type="GeneID" id="72551458"/>
<dbReference type="GeneID" id="928986"/>
<dbReference type="KEGG" id="vg:928986"/>
<dbReference type="Proteomes" id="UP000516359">
    <property type="component" value="Genome"/>
</dbReference>
<dbReference type="GO" id="GO:0044423">
    <property type="term" value="C:virion component"/>
    <property type="evidence" value="ECO:0007669"/>
    <property type="project" value="UniProtKB-KW"/>
</dbReference>
<dbReference type="GO" id="GO:0003677">
    <property type="term" value="F:DNA binding"/>
    <property type="evidence" value="ECO:0007669"/>
    <property type="project" value="UniProtKB-KW"/>
</dbReference>
<dbReference type="GO" id="GO:0052170">
    <property type="term" value="P:symbiont-mediated suppression of host innate immune response"/>
    <property type="evidence" value="ECO:0007669"/>
    <property type="project" value="UniProtKB-KW"/>
</dbReference>
<dbReference type="GO" id="GO:0019082">
    <property type="term" value="P:viral protein processing"/>
    <property type="evidence" value="ECO:0007669"/>
    <property type="project" value="InterPro"/>
</dbReference>
<dbReference type="InterPro" id="IPR006854">
    <property type="entry name" value="Phosphoprotein_F17"/>
</dbReference>
<dbReference type="Pfam" id="PF04767">
    <property type="entry name" value="Pox_F17"/>
    <property type="match status" value="1"/>
</dbReference>
<dbReference type="PIRSF" id="PIRSF003688">
    <property type="entry name" value="VAC_PP"/>
    <property type="match status" value="1"/>
</dbReference>
<organismHost>
    <name type="scientific">Cynomys gunnisoni</name>
    <name type="common">Gunnison's prairie dog</name>
    <name type="synonym">Spermophilus gunnisoni</name>
    <dbReference type="NCBI Taxonomy" id="45479"/>
</organismHost>
<organismHost>
    <name type="scientific">Cynomys leucurus</name>
    <name type="common">White-tailed prairie dog</name>
    <dbReference type="NCBI Taxonomy" id="99825"/>
</organismHost>
<organismHost>
    <name type="scientific">Cynomys ludovicianus</name>
    <name type="common">Black-tailed prairie dog</name>
    <dbReference type="NCBI Taxonomy" id="45480"/>
</organismHost>
<organismHost>
    <name type="scientific">Cynomys mexicanus</name>
    <name type="common">Mexican prairie dog</name>
    <dbReference type="NCBI Taxonomy" id="99826"/>
</organismHost>
<organismHost>
    <name type="scientific">Cynomys parvidens</name>
    <name type="common">Utah prairie dog</name>
    <dbReference type="NCBI Taxonomy" id="99827"/>
</organismHost>
<organismHost>
    <name type="scientific">Gliridae</name>
    <name type="common">dormice</name>
    <dbReference type="NCBI Taxonomy" id="30650"/>
</organismHost>
<organismHost>
    <name type="scientific">Heliosciurus ruwenzorii</name>
    <name type="common">Ruwenzori sun squirrel</name>
    <dbReference type="NCBI Taxonomy" id="226685"/>
</organismHost>
<organismHost>
    <name type="scientific">Homo sapiens</name>
    <name type="common">Human</name>
    <dbReference type="NCBI Taxonomy" id="9606"/>
</organismHost>
<organismHost>
    <name type="scientific">Mus musculus</name>
    <name type="common">Mouse</name>
    <dbReference type="NCBI Taxonomy" id="10090"/>
</organismHost>
<evidence type="ECO:0000250" key="1">
    <source>
        <dbReference type="UniProtKB" id="P07396"/>
    </source>
</evidence>
<evidence type="ECO:0000256" key="2">
    <source>
        <dbReference type="SAM" id="MobiDB-lite"/>
    </source>
</evidence>
<evidence type="ECO:0000305" key="3"/>
<comment type="function">
    <text evidence="1">Plays an essential role in virion assembly and morphogenesis. Also plays a role in the inhibition of host immune response by dysregulating mTOR. Sequesters host RICTOR and RPTOR, thereby disrupting mTORC1 and mTORC2 crosstalk. In turn, blocks the host antiviral response in part through mTOR-dependent degradation of cGAS, the primary poxvirus sensor.</text>
</comment>
<comment type="subunit">
    <text evidence="1">Self-associates to form high molecular-weight forms. Interacts with protein OPG157. Interacts with host RICTOR and RPTOR; these interactions disrupt the mTORC1 and mTORC2 crosstalk.</text>
</comment>
<comment type="subcellular location">
    <subcellularLocation>
        <location evidence="1">Virion</location>
    </subcellularLocation>
    <text evidence="1">Major component of the virion comprising about 10% of the virion mass.</text>
</comment>
<comment type="similarity">
    <text evidence="3">Belongs to the orthopoxvirus OPG062 family.</text>
</comment>
<keyword id="KW-0238">DNA-binding</keyword>
<keyword id="KW-0945">Host-virus interaction</keyword>
<keyword id="KW-1090">Inhibition of host innate immune response by virus</keyword>
<keyword id="KW-0426">Late protein</keyword>
<keyword id="KW-0597">Phosphoprotein</keyword>
<keyword id="KW-1185">Reference proteome</keyword>
<keyword id="KW-0899">Viral immunoevasion</keyword>
<keyword id="KW-0946">Virion</keyword>